<accession>P33419</accession>
<accession>D6W3P3</accession>
<keyword id="KW-0963">Cytoplasm</keyword>
<keyword id="KW-0206">Cytoskeleton</keyword>
<keyword id="KW-0539">Nucleus</keyword>
<keyword id="KW-0597">Phosphoprotein</keyword>
<keyword id="KW-1185">Reference proteome</keyword>
<proteinExistence type="evidence at protein level"/>
<evidence type="ECO:0000256" key="1">
    <source>
        <dbReference type="SAM" id="MobiDB-lite"/>
    </source>
</evidence>
<evidence type="ECO:0000269" key="2">
    <source>
    </source>
</evidence>
<evidence type="ECO:0000269" key="3">
    <source>
    </source>
</evidence>
<evidence type="ECO:0000269" key="4">
    <source>
    </source>
</evidence>
<evidence type="ECO:0000305" key="5"/>
<evidence type="ECO:0007744" key="6">
    <source>
    </source>
</evidence>
<reference key="1">
    <citation type="submission" date="1993-05" db="EMBL/GenBank/DDBJ databases">
        <authorList>
            <person name="Schlenstedt G."/>
            <person name="Silver P.A."/>
        </authorList>
    </citation>
    <scope>NUCLEOTIDE SEQUENCE [GENOMIC DNA]</scope>
</reference>
<reference key="2">
    <citation type="journal article" date="1997" name="Nature">
        <title>The nucleotide sequence of Saccharomyces cerevisiae chromosome XVI.</title>
        <authorList>
            <person name="Bussey H."/>
            <person name="Storms R.K."/>
            <person name="Ahmed A."/>
            <person name="Albermann K."/>
            <person name="Allen E."/>
            <person name="Ansorge W."/>
            <person name="Araujo R."/>
            <person name="Aparicio A."/>
            <person name="Barrell B.G."/>
            <person name="Badcock K."/>
            <person name="Benes V."/>
            <person name="Botstein D."/>
            <person name="Bowman S."/>
            <person name="Brueckner M."/>
            <person name="Carpenter J."/>
            <person name="Cherry J.M."/>
            <person name="Chung E."/>
            <person name="Churcher C.M."/>
            <person name="Coster F."/>
            <person name="Davis K."/>
            <person name="Davis R.W."/>
            <person name="Dietrich F.S."/>
            <person name="Delius H."/>
            <person name="DiPaolo T."/>
            <person name="Dubois E."/>
            <person name="Duesterhoeft A."/>
            <person name="Duncan M."/>
            <person name="Floeth M."/>
            <person name="Fortin N."/>
            <person name="Friesen J.D."/>
            <person name="Fritz C."/>
            <person name="Goffeau A."/>
            <person name="Hall J."/>
            <person name="Hebling U."/>
            <person name="Heumann K."/>
            <person name="Hilbert H."/>
            <person name="Hillier L.W."/>
            <person name="Hunicke-Smith S."/>
            <person name="Hyman R.W."/>
            <person name="Johnston M."/>
            <person name="Kalman S."/>
            <person name="Kleine K."/>
            <person name="Komp C."/>
            <person name="Kurdi O."/>
            <person name="Lashkari D."/>
            <person name="Lew H."/>
            <person name="Lin A."/>
            <person name="Lin D."/>
            <person name="Louis E.J."/>
            <person name="Marathe R."/>
            <person name="Messenguy F."/>
            <person name="Mewes H.-W."/>
            <person name="Mirtipati S."/>
            <person name="Moestl D."/>
            <person name="Mueller-Auer S."/>
            <person name="Namath A."/>
            <person name="Nentwich U."/>
            <person name="Oefner P."/>
            <person name="Pearson D."/>
            <person name="Petel F.X."/>
            <person name="Pohl T.M."/>
            <person name="Purnelle B."/>
            <person name="Rajandream M.A."/>
            <person name="Rechmann S."/>
            <person name="Rieger M."/>
            <person name="Riles L."/>
            <person name="Roberts D."/>
            <person name="Schaefer M."/>
            <person name="Scharfe M."/>
            <person name="Scherens B."/>
            <person name="Schramm S."/>
            <person name="Schroeder M."/>
            <person name="Sdicu A.-M."/>
            <person name="Tettelin H."/>
            <person name="Urrestarazu L.A."/>
            <person name="Ushinsky S."/>
            <person name="Vierendeels F."/>
            <person name="Vissers S."/>
            <person name="Voss H."/>
            <person name="Walsh S.V."/>
            <person name="Wambutt R."/>
            <person name="Wang Y."/>
            <person name="Wedler E."/>
            <person name="Wedler H."/>
            <person name="Winnett E."/>
            <person name="Zhong W.-W."/>
            <person name="Zollner A."/>
            <person name="Vo D.H."/>
            <person name="Hani J."/>
        </authorList>
    </citation>
    <scope>NUCLEOTIDE SEQUENCE [LARGE SCALE GENOMIC DNA]</scope>
    <source>
        <strain>ATCC 204508 / S288c</strain>
    </source>
</reference>
<reference key="3">
    <citation type="journal article" date="2014" name="G3 (Bethesda)">
        <title>The reference genome sequence of Saccharomyces cerevisiae: Then and now.</title>
        <authorList>
            <person name="Engel S.R."/>
            <person name="Dietrich F.S."/>
            <person name="Fisk D.G."/>
            <person name="Binkley G."/>
            <person name="Balakrishnan R."/>
            <person name="Costanzo M.C."/>
            <person name="Dwight S.S."/>
            <person name="Hitz B.C."/>
            <person name="Karra K."/>
            <person name="Nash R.S."/>
            <person name="Weng S."/>
            <person name="Wong E.D."/>
            <person name="Lloyd P."/>
            <person name="Skrzypek M.S."/>
            <person name="Miyasato S.R."/>
            <person name="Simison M."/>
            <person name="Cherry J.M."/>
        </authorList>
    </citation>
    <scope>GENOME REANNOTATION</scope>
    <source>
        <strain>ATCC 204508 / S288c</strain>
    </source>
</reference>
<reference key="4">
    <citation type="journal article" date="1999" name="Proc. Natl. Acad. Sci. U.S.A.">
        <title>Spc29p is a component of the Spc110p subcomplex and is essential for spindle pole body duplication.</title>
        <authorList>
            <person name="Elliott S."/>
            <person name="Knop M."/>
            <person name="Schlenstedt G."/>
            <person name="Schiebel E."/>
        </authorList>
    </citation>
    <scope>FUNCTION</scope>
    <scope>SUBCELLULAR LOCATION</scope>
    <scope>IDENTIFICATION IN THE SPC110 COMPLEX</scope>
</reference>
<reference key="5">
    <citation type="journal article" date="2000" name="EMBO J.">
        <title>The Bbp1p-Mps2p complex connects the SPB to the nuclear envelope and is essential for SPB duplication.</title>
        <authorList>
            <person name="Schramm C."/>
            <person name="Elliott S."/>
            <person name="Shevchenko A."/>
            <person name="Schiebel E."/>
        </authorList>
    </citation>
    <scope>FUNCTION</scope>
    <scope>INTERACTION WITH BBP1</scope>
</reference>
<reference key="6">
    <citation type="journal article" date="2007" name="Proc. Natl. Acad. Sci. U.S.A.">
        <title>Analysis of phosphorylation sites on proteins from Saccharomyces cerevisiae by electron transfer dissociation (ETD) mass spectrometry.</title>
        <authorList>
            <person name="Chi A."/>
            <person name="Huttenhower C."/>
            <person name="Geer L.Y."/>
            <person name="Coon J.J."/>
            <person name="Syka J.E.P."/>
            <person name="Bai D.L."/>
            <person name="Shabanowitz J."/>
            <person name="Burke D.J."/>
            <person name="Troyanskaya O.G."/>
            <person name="Hunt D.F."/>
        </authorList>
    </citation>
    <scope>PHOSPHORYLATION [LARGE SCALE ANALYSIS] AT THR-18 AND SER-65</scope>
    <scope>IDENTIFICATION BY MASS SPECTROMETRY [LARGE SCALE ANALYSIS]</scope>
</reference>
<reference key="7">
    <citation type="journal article" date="2008" name="Mol. Cell. Proteomics">
        <title>A multidimensional chromatography technology for in-depth phosphoproteome analysis.</title>
        <authorList>
            <person name="Albuquerque C.P."/>
            <person name="Smolka M.B."/>
            <person name="Payne S.H."/>
            <person name="Bafna V."/>
            <person name="Eng J."/>
            <person name="Zhou H."/>
        </authorList>
    </citation>
    <scope>IDENTIFICATION BY MASS SPECTROMETRY [LARGE SCALE ANALYSIS]</scope>
</reference>
<reference key="8">
    <citation type="journal article" date="2009" name="J. Biol. Chem.">
        <title>Budding yeast centrosome duplication requires stabilization of Spc29 via Mps1-mediated phosphorylation.</title>
        <authorList>
            <person name="Holinger E.P."/>
            <person name="Old W.M."/>
            <person name="Giddings T.H. Jr."/>
            <person name="Wong C."/>
            <person name="Yates J.R. III"/>
            <person name="Winey M."/>
        </authorList>
    </citation>
    <scope>PHOSPHORYLATION AT THR-240</scope>
    <scope>MUTAGENESIS OF THR-240</scope>
    <scope>IDENTIFICATION BY MASS SPECTROMETRY</scope>
    <scope>FUNCTION</scope>
</reference>
<reference key="9">
    <citation type="journal article" date="2009" name="Science">
        <title>Global analysis of Cdk1 substrate phosphorylation sites provides insights into evolution.</title>
        <authorList>
            <person name="Holt L.J."/>
            <person name="Tuch B.B."/>
            <person name="Villen J."/>
            <person name="Johnson A.D."/>
            <person name="Gygi S.P."/>
            <person name="Morgan D.O."/>
        </authorList>
    </citation>
    <scope>IDENTIFICATION BY MASS SPECTROMETRY [LARGE SCALE ANALYSIS]</scope>
</reference>
<comment type="function">
    <text evidence="2 3 4">Component of the spindle pole body (SPB) required for the proper execution of spindle pole body (SPB) duplication. Links the central plaque component SPC42 to the inner plaque component SPC110.</text>
</comment>
<comment type="subunit">
    <text evidence="2 3">Component of the SPC110 complex containing at least CMD1, SPC29, SPC42 and SCP110. Interacts with BBP1.</text>
</comment>
<comment type="interaction">
    <interactant intactId="EBI-12041">
        <id>P33419</id>
    </interactant>
    <interactant intactId="EBI-3448">
        <id>Q12365</id>
        <label>BBP1</label>
    </interactant>
    <organismsDiffer>false</organismsDiffer>
    <experiments>3</experiments>
</comment>
<comment type="interaction">
    <interactant intactId="EBI-12041">
        <id>P33419</id>
    </interactant>
    <interactant intactId="EBI-9749">
        <id>P28743</id>
        <label>KIP2</label>
    </interactant>
    <organismsDiffer>false</organismsDiffer>
    <experiments>4</experiments>
</comment>
<comment type="interaction">
    <interactant intactId="EBI-12041">
        <id>P33419</id>
    </interactant>
    <interactant intactId="EBI-25261">
        <id>P40457</id>
        <label>MLP2</label>
    </interactant>
    <organismsDiffer>false</organismsDiffer>
    <experiments>2</experiments>
</comment>
<comment type="interaction">
    <interactant intactId="EBI-12041">
        <id>P33419</id>
    </interactant>
    <interactant intactId="EBI-12041">
        <id>P33419</id>
        <label>SPC29</label>
    </interactant>
    <organismsDiffer>false</organismsDiffer>
    <experiments>7</experiments>
</comment>
<comment type="subcellular location">
    <subcellularLocation>
        <location evidence="2">Nucleus</location>
    </subcellularLocation>
    <subcellularLocation>
        <location evidence="2">Cytoplasm</location>
        <location evidence="2">Cytoskeleton</location>
        <location evidence="2">Microtubule organizing center</location>
        <location evidence="2">Spindle pole body</location>
    </subcellularLocation>
</comment>
<comment type="PTM">
    <text evidence="4">MPS1-mediated phosphorylation at Thr-240 is required for spindle pole body duplication.</text>
</comment>
<comment type="similarity">
    <text evidence="5">Belongs to the SPC29 family.</text>
</comment>
<sequence>MDYSNFGNSASKKFQDDTLNRVRKEHEEALKKLREENFSSNTSELGNKKHYRAQERMSSPLHRLSPTGKSDDRKVKSPLDDKLRRQLREGNTRLPPPPFSSYGMPPTNRSNLDRIRRRTSSPVRTDKFASQNVIDDQRLEIKYLERIVYDQGTVIDNLTSRITRLESFILNSISDRGDKNFASLEHSRSFSGFPTNKTYGLQMGGLYENDMPYRRSSDNINKEGAREDRSSQIHIENESTEDILKILSSSFHN</sequence>
<dbReference type="EMBL" id="X72226">
    <property type="protein sequence ID" value="CAA51029.1"/>
    <property type="molecule type" value="Genomic_DNA"/>
</dbReference>
<dbReference type="EMBL" id="U43503">
    <property type="protein sequence ID" value="AAB68238.1"/>
    <property type="molecule type" value="Genomic_DNA"/>
</dbReference>
<dbReference type="EMBL" id="BK006949">
    <property type="protein sequence ID" value="DAA11309.1"/>
    <property type="molecule type" value="Genomic_DNA"/>
</dbReference>
<dbReference type="PIR" id="S34342">
    <property type="entry name" value="S34342"/>
</dbReference>
<dbReference type="RefSeq" id="NP_015201.1">
    <property type="nucleotide sequence ID" value="NM_001183938.1"/>
</dbReference>
<dbReference type="SMR" id="P33419"/>
<dbReference type="BioGRID" id="36057">
    <property type="interactions" value="218"/>
</dbReference>
<dbReference type="ComplexPortal" id="CPX-1419">
    <property type="entry name" value="Spindle pole body central plaque complex"/>
</dbReference>
<dbReference type="DIP" id="DIP-2445N"/>
<dbReference type="FunCoup" id="P33419">
    <property type="interactions" value="308"/>
</dbReference>
<dbReference type="IntAct" id="P33419">
    <property type="interactions" value="44"/>
</dbReference>
<dbReference type="MINT" id="P33419"/>
<dbReference type="STRING" id="4932.YPL124W"/>
<dbReference type="iPTMnet" id="P33419"/>
<dbReference type="PaxDb" id="4932-YPL124W"/>
<dbReference type="PeptideAtlas" id="P33419"/>
<dbReference type="EnsemblFungi" id="YPL124W_mRNA">
    <property type="protein sequence ID" value="YPL124W"/>
    <property type="gene ID" value="YPL124W"/>
</dbReference>
<dbReference type="GeneID" id="855979"/>
<dbReference type="KEGG" id="sce:YPL124W"/>
<dbReference type="AGR" id="SGD:S000006045"/>
<dbReference type="SGD" id="S000006045">
    <property type="gene designation" value="SPC29"/>
</dbReference>
<dbReference type="VEuPathDB" id="FungiDB:YPL124W"/>
<dbReference type="HOGENOM" id="CLU_1099229_0_0_1"/>
<dbReference type="InParanoid" id="P33419"/>
<dbReference type="OrthoDB" id="4043735at2759"/>
<dbReference type="BioCyc" id="YEAST:G3O-34023-MONOMER"/>
<dbReference type="BioGRID-ORCS" id="855979">
    <property type="hits" value="7 hits in 10 CRISPR screens"/>
</dbReference>
<dbReference type="CD-CODE" id="876000F7">
    <property type="entry name" value="Centrosome"/>
</dbReference>
<dbReference type="PRO" id="PR:P33419"/>
<dbReference type="Proteomes" id="UP000002311">
    <property type="component" value="Chromosome XVI"/>
</dbReference>
<dbReference type="RNAct" id="P33419">
    <property type="molecule type" value="protein"/>
</dbReference>
<dbReference type="GO" id="GO:0061493">
    <property type="term" value="C:central plaque of mitotic spindle pole body"/>
    <property type="evidence" value="ECO:0000314"/>
    <property type="project" value="SGD"/>
</dbReference>
<dbReference type="GO" id="GO:0005823">
    <property type="term" value="C:central plaque of spindle pole body"/>
    <property type="evidence" value="ECO:0000303"/>
    <property type="project" value="ComplexPortal"/>
</dbReference>
<dbReference type="GO" id="GO:0005737">
    <property type="term" value="C:cytoplasm"/>
    <property type="evidence" value="ECO:0007669"/>
    <property type="project" value="UniProtKB-KW"/>
</dbReference>
<dbReference type="GO" id="GO:0005634">
    <property type="term" value="C:nucleus"/>
    <property type="evidence" value="ECO:0007669"/>
    <property type="project" value="UniProtKB-SubCell"/>
</dbReference>
<dbReference type="GO" id="GO:0005816">
    <property type="term" value="C:spindle pole body"/>
    <property type="evidence" value="ECO:0007005"/>
    <property type="project" value="SGD"/>
</dbReference>
<dbReference type="GO" id="GO:0042802">
    <property type="term" value="F:identical protein binding"/>
    <property type="evidence" value="ECO:0000353"/>
    <property type="project" value="IntAct"/>
</dbReference>
<dbReference type="GO" id="GO:0005200">
    <property type="term" value="F:structural constituent of cytoskeleton"/>
    <property type="evidence" value="ECO:0007669"/>
    <property type="project" value="InterPro"/>
</dbReference>
<dbReference type="GO" id="GO:1903087">
    <property type="term" value="P:mitotic spindle pole body duplication"/>
    <property type="evidence" value="ECO:0000315"/>
    <property type="project" value="SGD"/>
</dbReference>
<dbReference type="GO" id="GO:0010968">
    <property type="term" value="P:regulation of microtubule nucleation"/>
    <property type="evidence" value="ECO:0000303"/>
    <property type="project" value="ComplexPortal"/>
</dbReference>
<dbReference type="InterPro" id="IPR031392">
    <property type="entry name" value="Spc29"/>
</dbReference>
<dbReference type="Pfam" id="PF17082">
    <property type="entry name" value="Spc29"/>
    <property type="match status" value="1"/>
</dbReference>
<protein>
    <recommendedName>
        <fullName>Spindle pole component 29</fullName>
    </recommendedName>
</protein>
<feature type="chain" id="PRO_0000096846" description="Spindle pole component 29">
    <location>
        <begin position="1"/>
        <end position="253"/>
    </location>
</feature>
<feature type="region of interest" description="Disordered" evidence="1">
    <location>
        <begin position="1"/>
        <end position="20"/>
    </location>
</feature>
<feature type="region of interest" description="Disordered" evidence="1">
    <location>
        <begin position="31"/>
        <end position="123"/>
    </location>
</feature>
<feature type="region of interest" description="Disordered" evidence="1">
    <location>
        <begin position="210"/>
        <end position="231"/>
    </location>
</feature>
<feature type="compositionally biased region" description="Polar residues" evidence="1">
    <location>
        <begin position="1"/>
        <end position="12"/>
    </location>
</feature>
<feature type="compositionally biased region" description="Basic and acidic residues" evidence="1">
    <location>
        <begin position="69"/>
        <end position="91"/>
    </location>
</feature>
<feature type="compositionally biased region" description="Basic and acidic residues" evidence="1">
    <location>
        <begin position="211"/>
        <end position="231"/>
    </location>
</feature>
<feature type="modified residue" description="Phosphothreonine" evidence="6">
    <location>
        <position position="18"/>
    </location>
</feature>
<feature type="modified residue" description="Phosphoserine" evidence="6">
    <location>
        <position position="65"/>
    </location>
</feature>
<feature type="modified residue" description="Phosphothreonine; by MPS1" evidence="4">
    <location>
        <position position="240"/>
    </location>
</feature>
<feature type="mutagenesis site" description="Lead to defects in spindle pole body assembly." evidence="4">
    <original>T</original>
    <variation>A</variation>
    <location>
        <position position="240"/>
    </location>
</feature>
<gene>
    <name type="primary">SPC29</name>
    <name type="synonym">LPH3</name>
    <name type="synonym">NIP29</name>
    <name type="ordered locus">YPL124W</name>
    <name type="ORF">LPH3W</name>
</gene>
<organism>
    <name type="scientific">Saccharomyces cerevisiae (strain ATCC 204508 / S288c)</name>
    <name type="common">Baker's yeast</name>
    <dbReference type="NCBI Taxonomy" id="559292"/>
    <lineage>
        <taxon>Eukaryota</taxon>
        <taxon>Fungi</taxon>
        <taxon>Dikarya</taxon>
        <taxon>Ascomycota</taxon>
        <taxon>Saccharomycotina</taxon>
        <taxon>Saccharomycetes</taxon>
        <taxon>Saccharomycetales</taxon>
        <taxon>Saccharomycetaceae</taxon>
        <taxon>Saccharomyces</taxon>
    </lineage>
</organism>
<name>SPC29_YEAST</name>